<comment type="function">
    <text evidence="1">Catalyzes the phospholipid dependent N-acylation of the N-terminal cysteine of apolipoprotein, the last step in lipoprotein maturation.</text>
</comment>
<comment type="catalytic activity">
    <reaction evidence="1">
        <text>N-terminal S-1,2-diacyl-sn-glyceryl-L-cysteinyl-[lipoprotein] + a glycerophospholipid = N-acyl-S-1,2-diacyl-sn-glyceryl-L-cysteinyl-[lipoprotein] + a 2-acyl-sn-glycero-3-phospholipid + H(+)</text>
        <dbReference type="Rhea" id="RHEA:48228"/>
        <dbReference type="Rhea" id="RHEA-COMP:14681"/>
        <dbReference type="Rhea" id="RHEA-COMP:14684"/>
        <dbReference type="ChEBI" id="CHEBI:15378"/>
        <dbReference type="ChEBI" id="CHEBI:136912"/>
        <dbReference type="ChEBI" id="CHEBI:140656"/>
        <dbReference type="ChEBI" id="CHEBI:140657"/>
        <dbReference type="ChEBI" id="CHEBI:140660"/>
        <dbReference type="EC" id="2.3.1.269"/>
    </reaction>
</comment>
<comment type="pathway">
    <text evidence="1">Protein modification; lipoprotein biosynthesis (N-acyl transfer).</text>
</comment>
<comment type="subcellular location">
    <subcellularLocation>
        <location evidence="1">Cell inner membrane</location>
        <topology evidence="1">Multi-pass membrane protein</topology>
    </subcellularLocation>
</comment>
<comment type="similarity">
    <text evidence="1">Belongs to the CN hydrolase family. Apolipoprotein N-acyltransferase subfamily.</text>
</comment>
<accession>Q87RP8</accession>
<protein>
    <recommendedName>
        <fullName evidence="1">Apolipoprotein N-acyltransferase</fullName>
        <shortName evidence="1">ALP N-acyltransferase</shortName>
        <ecNumber evidence="1">2.3.1.269</ecNumber>
    </recommendedName>
</protein>
<organism>
    <name type="scientific">Vibrio parahaemolyticus serotype O3:K6 (strain RIMD 2210633)</name>
    <dbReference type="NCBI Taxonomy" id="223926"/>
    <lineage>
        <taxon>Bacteria</taxon>
        <taxon>Pseudomonadati</taxon>
        <taxon>Pseudomonadota</taxon>
        <taxon>Gammaproteobacteria</taxon>
        <taxon>Vibrionales</taxon>
        <taxon>Vibrionaceae</taxon>
        <taxon>Vibrio</taxon>
    </lineage>
</organism>
<feature type="chain" id="PRO_0000178108" description="Apolipoprotein N-acyltransferase">
    <location>
        <begin position="1"/>
        <end position="505"/>
    </location>
</feature>
<feature type="transmembrane region" description="Helical" evidence="1">
    <location>
        <begin position="26"/>
        <end position="46"/>
    </location>
</feature>
<feature type="transmembrane region" description="Helical" evidence="1">
    <location>
        <begin position="66"/>
        <end position="86"/>
    </location>
</feature>
<feature type="transmembrane region" description="Helical" evidence="1">
    <location>
        <begin position="89"/>
        <end position="109"/>
    </location>
</feature>
<feature type="transmembrane region" description="Helical" evidence="1">
    <location>
        <begin position="129"/>
        <end position="149"/>
    </location>
</feature>
<feature type="transmembrane region" description="Helical" evidence="1">
    <location>
        <begin position="161"/>
        <end position="181"/>
    </location>
</feature>
<feature type="transmembrane region" description="Helical" evidence="1">
    <location>
        <begin position="186"/>
        <end position="206"/>
    </location>
</feature>
<feature type="transmembrane region" description="Helical" evidence="1">
    <location>
        <begin position="481"/>
        <end position="501"/>
    </location>
</feature>
<feature type="domain" description="CN hydrolase" evidence="1">
    <location>
        <begin position="225"/>
        <end position="471"/>
    </location>
</feature>
<feature type="active site" description="Proton acceptor" evidence="1">
    <location>
        <position position="264"/>
    </location>
</feature>
<feature type="active site" evidence="1">
    <location>
        <position position="330"/>
    </location>
</feature>
<feature type="active site" description="Nucleophile" evidence="1">
    <location>
        <position position="382"/>
    </location>
</feature>
<gene>
    <name evidence="1" type="primary">lnt</name>
    <name type="ordered locus">VP0729</name>
</gene>
<name>LNT_VIBPA</name>
<sequence length="505" mass="56900">MMNLLFHRLKRPLAAAFVGASTTLAFAPYQLWPIAILSPAILLILLANQTPKRALWIGYAWGLGQFATGVSWVYVSISGFGGMPLIANLFLMGMLIAYLAVYSGLFAWLNNKFFPQFSLSKALLAAPALWLITDWLRGWVMTGFPWLWLGYSQIDAPLASFAPIGGVELLTLFVLISAGALAYAWIHKQWLMIIIPVVLMSAGFGIRQYDWVTPRPEDTTKVALIQGNVDQNLKWLPSQRWPTIMKYADLTRENWDADIIVWPEAAIPAFEVEVPSFLSNIDSAAKMNNSAIITGIVNQSEDRQFYNSILSLGVTPYGDYSFDMSERYHKHHLLPFGEFVPFEDILRPLAPFFNLPMSSFSRGAFVQPNIVANGMHMAPALCYEIIFNEQVRQNVTDETDFILTLSNDAWFGHSIGPLQHMEIARMRALELGKPLIRSTNNGLTAVTDYKGKIVEQVPQFETAVLRAELTPTDGTTPYRTFGTWPLYFWVALSLMLAWWLPRKKD</sequence>
<keyword id="KW-0012">Acyltransferase</keyword>
<keyword id="KW-0997">Cell inner membrane</keyword>
<keyword id="KW-1003">Cell membrane</keyword>
<keyword id="KW-0472">Membrane</keyword>
<keyword id="KW-0808">Transferase</keyword>
<keyword id="KW-0812">Transmembrane</keyword>
<keyword id="KW-1133">Transmembrane helix</keyword>
<dbReference type="EC" id="2.3.1.269" evidence="1"/>
<dbReference type="EMBL" id="BA000031">
    <property type="protein sequence ID" value="BAC58992.1"/>
    <property type="molecule type" value="Genomic_DNA"/>
</dbReference>
<dbReference type="RefSeq" id="NP_797108.1">
    <property type="nucleotide sequence ID" value="NC_004603.1"/>
</dbReference>
<dbReference type="RefSeq" id="WP_005483491.1">
    <property type="nucleotide sequence ID" value="NC_004603.1"/>
</dbReference>
<dbReference type="SMR" id="Q87RP8"/>
<dbReference type="GeneID" id="1188204"/>
<dbReference type="KEGG" id="vpa:VP0729"/>
<dbReference type="PATRIC" id="fig|223926.6.peg.698"/>
<dbReference type="eggNOG" id="COG0815">
    <property type="taxonomic scope" value="Bacteria"/>
</dbReference>
<dbReference type="HOGENOM" id="CLU_019563_3_0_6"/>
<dbReference type="UniPathway" id="UPA00666"/>
<dbReference type="Proteomes" id="UP000002493">
    <property type="component" value="Chromosome 1"/>
</dbReference>
<dbReference type="GO" id="GO:0005886">
    <property type="term" value="C:plasma membrane"/>
    <property type="evidence" value="ECO:0007669"/>
    <property type="project" value="UniProtKB-SubCell"/>
</dbReference>
<dbReference type="GO" id="GO:0016410">
    <property type="term" value="F:N-acyltransferase activity"/>
    <property type="evidence" value="ECO:0007669"/>
    <property type="project" value="UniProtKB-UniRule"/>
</dbReference>
<dbReference type="GO" id="GO:0042158">
    <property type="term" value="P:lipoprotein biosynthetic process"/>
    <property type="evidence" value="ECO:0007669"/>
    <property type="project" value="UniProtKB-UniRule"/>
</dbReference>
<dbReference type="CDD" id="cd07571">
    <property type="entry name" value="ALP_N-acyl_transferase"/>
    <property type="match status" value="1"/>
</dbReference>
<dbReference type="Gene3D" id="3.60.110.10">
    <property type="entry name" value="Carbon-nitrogen hydrolase"/>
    <property type="match status" value="1"/>
</dbReference>
<dbReference type="HAMAP" id="MF_01148">
    <property type="entry name" value="Lnt"/>
    <property type="match status" value="1"/>
</dbReference>
<dbReference type="InterPro" id="IPR004563">
    <property type="entry name" value="Apolipo_AcylTrfase"/>
</dbReference>
<dbReference type="InterPro" id="IPR003010">
    <property type="entry name" value="C-N_Hydrolase"/>
</dbReference>
<dbReference type="InterPro" id="IPR036526">
    <property type="entry name" value="C-N_Hydrolase_sf"/>
</dbReference>
<dbReference type="InterPro" id="IPR045378">
    <property type="entry name" value="LNT_N"/>
</dbReference>
<dbReference type="NCBIfam" id="TIGR00546">
    <property type="entry name" value="lnt"/>
    <property type="match status" value="1"/>
</dbReference>
<dbReference type="PANTHER" id="PTHR38686">
    <property type="entry name" value="APOLIPOPROTEIN N-ACYLTRANSFERASE"/>
    <property type="match status" value="1"/>
</dbReference>
<dbReference type="PANTHER" id="PTHR38686:SF1">
    <property type="entry name" value="APOLIPOPROTEIN N-ACYLTRANSFERASE"/>
    <property type="match status" value="1"/>
</dbReference>
<dbReference type="Pfam" id="PF00795">
    <property type="entry name" value="CN_hydrolase"/>
    <property type="match status" value="1"/>
</dbReference>
<dbReference type="Pfam" id="PF20154">
    <property type="entry name" value="LNT_N"/>
    <property type="match status" value="1"/>
</dbReference>
<dbReference type="SUPFAM" id="SSF56317">
    <property type="entry name" value="Carbon-nitrogen hydrolase"/>
    <property type="match status" value="1"/>
</dbReference>
<dbReference type="PROSITE" id="PS50263">
    <property type="entry name" value="CN_HYDROLASE"/>
    <property type="match status" value="1"/>
</dbReference>
<proteinExistence type="inferred from homology"/>
<reference key="1">
    <citation type="journal article" date="2003" name="Lancet">
        <title>Genome sequence of Vibrio parahaemolyticus: a pathogenic mechanism distinct from that of V. cholerae.</title>
        <authorList>
            <person name="Makino K."/>
            <person name="Oshima K."/>
            <person name="Kurokawa K."/>
            <person name="Yokoyama K."/>
            <person name="Uda T."/>
            <person name="Tagomori K."/>
            <person name="Iijima Y."/>
            <person name="Najima M."/>
            <person name="Nakano M."/>
            <person name="Yamashita A."/>
            <person name="Kubota Y."/>
            <person name="Kimura S."/>
            <person name="Yasunaga T."/>
            <person name="Honda T."/>
            <person name="Shinagawa H."/>
            <person name="Hattori M."/>
            <person name="Iida T."/>
        </authorList>
    </citation>
    <scope>NUCLEOTIDE SEQUENCE [LARGE SCALE GENOMIC DNA]</scope>
    <source>
        <strain>RIMD 2210633</strain>
    </source>
</reference>
<evidence type="ECO:0000255" key="1">
    <source>
        <dbReference type="HAMAP-Rule" id="MF_01148"/>
    </source>
</evidence>